<organism>
    <name type="scientific">Xanthobacter autotrophicus (strain ATCC BAA-1158 / Py2)</name>
    <dbReference type="NCBI Taxonomy" id="78245"/>
    <lineage>
        <taxon>Bacteria</taxon>
        <taxon>Pseudomonadati</taxon>
        <taxon>Pseudomonadota</taxon>
        <taxon>Alphaproteobacteria</taxon>
        <taxon>Hyphomicrobiales</taxon>
        <taxon>Xanthobacteraceae</taxon>
        <taxon>Xanthobacter</taxon>
    </lineage>
</organism>
<reference key="1">
    <citation type="submission" date="2007-07" db="EMBL/GenBank/DDBJ databases">
        <title>Complete sequence of chromosome of Xanthobacter autotrophicus Py2.</title>
        <authorList>
            <consortium name="US DOE Joint Genome Institute"/>
            <person name="Copeland A."/>
            <person name="Lucas S."/>
            <person name="Lapidus A."/>
            <person name="Barry K."/>
            <person name="Glavina del Rio T."/>
            <person name="Hammon N."/>
            <person name="Israni S."/>
            <person name="Dalin E."/>
            <person name="Tice H."/>
            <person name="Pitluck S."/>
            <person name="Sims D."/>
            <person name="Brettin T."/>
            <person name="Bruce D."/>
            <person name="Detter J.C."/>
            <person name="Han C."/>
            <person name="Tapia R."/>
            <person name="Brainard J."/>
            <person name="Schmutz J."/>
            <person name="Larimer F."/>
            <person name="Land M."/>
            <person name="Hauser L."/>
            <person name="Kyrpides N."/>
            <person name="Kim E."/>
            <person name="Ensigns S.A."/>
            <person name="Richardson P."/>
        </authorList>
    </citation>
    <scope>NUCLEOTIDE SEQUENCE [LARGE SCALE GENOMIC DNA]</scope>
    <source>
        <strain>ATCC BAA-1158 / Py2</strain>
    </source>
</reference>
<protein>
    <recommendedName>
        <fullName evidence="1">Isopentenyl-diphosphate delta-isomerase</fullName>
        <shortName evidence="1">IPP isomerase</shortName>
        <ecNumber evidence="1">5.3.3.2</ecNumber>
    </recommendedName>
    <alternativeName>
        <fullName evidence="1">Isopentenyl diphosphate:dimethylallyl diphosphate isomerase</fullName>
    </alternativeName>
    <alternativeName>
        <fullName evidence="1">Isopentenyl pyrophosphate isomerase</fullName>
    </alternativeName>
    <alternativeName>
        <fullName evidence="1">Type 2 isopentenyl diphosphate isomerase</fullName>
        <shortName evidence="1">IDI-2</shortName>
    </alternativeName>
</protein>
<proteinExistence type="inferred from homology"/>
<name>IDI2_XANP2</name>
<keyword id="KW-0963">Cytoplasm</keyword>
<keyword id="KW-0285">Flavoprotein</keyword>
<keyword id="KW-0288">FMN</keyword>
<keyword id="KW-0413">Isomerase</keyword>
<keyword id="KW-0414">Isoprene biosynthesis</keyword>
<keyword id="KW-0460">Magnesium</keyword>
<keyword id="KW-0479">Metal-binding</keyword>
<keyword id="KW-0521">NADP</keyword>
<keyword id="KW-1185">Reference proteome</keyword>
<accession>A7IMW3</accession>
<feature type="chain" id="PRO_1000120549" description="Isopentenyl-diphosphate delta-isomerase">
    <location>
        <begin position="1"/>
        <end position="343"/>
    </location>
</feature>
<feature type="binding site" evidence="1">
    <location>
        <begin position="9"/>
        <end position="10"/>
    </location>
    <ligand>
        <name>substrate</name>
    </ligand>
</feature>
<feature type="binding site" evidence="1">
    <location>
        <position position="67"/>
    </location>
    <ligand>
        <name>FMN</name>
        <dbReference type="ChEBI" id="CHEBI:58210"/>
    </ligand>
</feature>
<feature type="binding site" evidence="1">
    <location>
        <begin position="68"/>
        <end position="70"/>
    </location>
    <ligand>
        <name>FMN</name>
        <dbReference type="ChEBI" id="CHEBI:58210"/>
    </ligand>
</feature>
<feature type="binding site" evidence="1">
    <location>
        <begin position="98"/>
        <end position="100"/>
    </location>
    <ligand>
        <name>substrate</name>
    </ligand>
</feature>
<feature type="binding site" evidence="1">
    <location>
        <position position="98"/>
    </location>
    <ligand>
        <name>FMN</name>
        <dbReference type="ChEBI" id="CHEBI:58210"/>
    </ligand>
</feature>
<feature type="binding site" evidence="1">
    <location>
        <position position="127"/>
    </location>
    <ligand>
        <name>FMN</name>
        <dbReference type="ChEBI" id="CHEBI:58210"/>
    </ligand>
</feature>
<feature type="binding site" evidence="1">
    <location>
        <position position="162"/>
    </location>
    <ligand>
        <name>substrate</name>
    </ligand>
</feature>
<feature type="binding site" evidence="1">
    <location>
        <position position="163"/>
    </location>
    <ligand>
        <name>Mg(2+)</name>
        <dbReference type="ChEBI" id="CHEBI:18420"/>
    </ligand>
</feature>
<feature type="binding site" evidence="1">
    <location>
        <position position="194"/>
    </location>
    <ligand>
        <name>FMN</name>
        <dbReference type="ChEBI" id="CHEBI:58210"/>
    </ligand>
</feature>
<feature type="binding site" evidence="1">
    <location>
        <position position="224"/>
    </location>
    <ligand>
        <name>FMN</name>
        <dbReference type="ChEBI" id="CHEBI:58210"/>
    </ligand>
</feature>
<feature type="binding site" evidence="1">
    <location>
        <begin position="273"/>
        <end position="275"/>
    </location>
    <ligand>
        <name>FMN</name>
        <dbReference type="ChEBI" id="CHEBI:58210"/>
    </ligand>
</feature>
<feature type="binding site" evidence="1">
    <location>
        <begin position="294"/>
        <end position="295"/>
    </location>
    <ligand>
        <name>FMN</name>
        <dbReference type="ChEBI" id="CHEBI:58210"/>
    </ligand>
</feature>
<dbReference type="EC" id="5.3.3.2" evidence="1"/>
<dbReference type="EMBL" id="CP000781">
    <property type="protein sequence ID" value="ABS69356.1"/>
    <property type="molecule type" value="Genomic_DNA"/>
</dbReference>
<dbReference type="SMR" id="A7IMW3"/>
<dbReference type="STRING" id="78245.Xaut_4134"/>
<dbReference type="KEGG" id="xau:Xaut_4134"/>
<dbReference type="eggNOG" id="COG1304">
    <property type="taxonomic scope" value="Bacteria"/>
</dbReference>
<dbReference type="HOGENOM" id="CLU_065515_1_0_5"/>
<dbReference type="OrthoDB" id="9795032at2"/>
<dbReference type="PhylomeDB" id="A7IMW3"/>
<dbReference type="Proteomes" id="UP000002417">
    <property type="component" value="Chromosome"/>
</dbReference>
<dbReference type="GO" id="GO:0005737">
    <property type="term" value="C:cytoplasm"/>
    <property type="evidence" value="ECO:0007669"/>
    <property type="project" value="UniProtKB-SubCell"/>
</dbReference>
<dbReference type="GO" id="GO:0010181">
    <property type="term" value="F:FMN binding"/>
    <property type="evidence" value="ECO:0007669"/>
    <property type="project" value="UniProtKB-UniRule"/>
</dbReference>
<dbReference type="GO" id="GO:0004452">
    <property type="term" value="F:isopentenyl-diphosphate delta-isomerase activity"/>
    <property type="evidence" value="ECO:0007669"/>
    <property type="project" value="UniProtKB-UniRule"/>
</dbReference>
<dbReference type="GO" id="GO:0000287">
    <property type="term" value="F:magnesium ion binding"/>
    <property type="evidence" value="ECO:0007669"/>
    <property type="project" value="UniProtKB-UniRule"/>
</dbReference>
<dbReference type="GO" id="GO:0070402">
    <property type="term" value="F:NADPH binding"/>
    <property type="evidence" value="ECO:0007669"/>
    <property type="project" value="UniProtKB-UniRule"/>
</dbReference>
<dbReference type="GO" id="GO:0016491">
    <property type="term" value="F:oxidoreductase activity"/>
    <property type="evidence" value="ECO:0007669"/>
    <property type="project" value="InterPro"/>
</dbReference>
<dbReference type="GO" id="GO:0008299">
    <property type="term" value="P:isoprenoid biosynthetic process"/>
    <property type="evidence" value="ECO:0007669"/>
    <property type="project" value="UniProtKB-UniRule"/>
</dbReference>
<dbReference type="CDD" id="cd02811">
    <property type="entry name" value="IDI-2_FMN"/>
    <property type="match status" value="1"/>
</dbReference>
<dbReference type="Gene3D" id="3.20.20.70">
    <property type="entry name" value="Aldolase class I"/>
    <property type="match status" value="1"/>
</dbReference>
<dbReference type="HAMAP" id="MF_00354">
    <property type="entry name" value="Idi_2"/>
    <property type="match status" value="1"/>
</dbReference>
<dbReference type="InterPro" id="IPR013785">
    <property type="entry name" value="Aldolase_TIM"/>
</dbReference>
<dbReference type="InterPro" id="IPR000262">
    <property type="entry name" value="FMN-dep_DH"/>
</dbReference>
<dbReference type="InterPro" id="IPR011179">
    <property type="entry name" value="IPdP_isomerase"/>
</dbReference>
<dbReference type="NCBIfam" id="TIGR02151">
    <property type="entry name" value="IPP_isom_2"/>
    <property type="match status" value="1"/>
</dbReference>
<dbReference type="PANTHER" id="PTHR43665">
    <property type="entry name" value="ISOPENTENYL-DIPHOSPHATE DELTA-ISOMERASE"/>
    <property type="match status" value="1"/>
</dbReference>
<dbReference type="PANTHER" id="PTHR43665:SF1">
    <property type="entry name" value="ISOPENTENYL-DIPHOSPHATE DELTA-ISOMERASE"/>
    <property type="match status" value="1"/>
</dbReference>
<dbReference type="Pfam" id="PF01070">
    <property type="entry name" value="FMN_dh"/>
    <property type="match status" value="2"/>
</dbReference>
<dbReference type="PIRSF" id="PIRSF003314">
    <property type="entry name" value="IPP_isomerase"/>
    <property type="match status" value="1"/>
</dbReference>
<dbReference type="SMART" id="SM01240">
    <property type="entry name" value="IMPDH"/>
    <property type="match status" value="1"/>
</dbReference>
<dbReference type="SUPFAM" id="SSF51395">
    <property type="entry name" value="FMN-linked oxidoreductases"/>
    <property type="match status" value="1"/>
</dbReference>
<sequence length="343" mass="35325">MDESGAGRRKEDHIDIVLAGGRVASRLDAGFDRVRFVHCALPELDLDAIDLSTRFLGRPLKAPFLISAMTGGPARAESINAHLAEAAQALGIALGVGSQRIAIEDGSAGGLGADLRRRAPDIALFANLGAAQLLAARGLDAARRAVEMIGADVLVIHLNPLQEAIQQGGDRDWRGVFDRIGSLCVSLSAPVVVKEVGFGLSGAVARRLADCGVAALDVAGAGGTNWALVEGERGTGRSRAVATAFADWGIPTAQAVVEVRAACPDLPLIASGGVRHGVDAAKAIRLGADLVGQAAGTLKAAITSTEAVVEHFSQMTDQLRIACFATGAADLDALRRVPLATMD</sequence>
<gene>
    <name evidence="1" type="primary">fni</name>
    <name type="ordered locus">Xaut_4134</name>
</gene>
<evidence type="ECO:0000255" key="1">
    <source>
        <dbReference type="HAMAP-Rule" id="MF_00354"/>
    </source>
</evidence>
<comment type="function">
    <text evidence="1">Involved in the biosynthesis of isoprenoids. Catalyzes the 1,3-allylic rearrangement of the homoallylic substrate isopentenyl (IPP) to its allylic isomer, dimethylallyl diphosphate (DMAPP).</text>
</comment>
<comment type="catalytic activity">
    <reaction evidence="1">
        <text>isopentenyl diphosphate = dimethylallyl diphosphate</text>
        <dbReference type="Rhea" id="RHEA:23284"/>
        <dbReference type="ChEBI" id="CHEBI:57623"/>
        <dbReference type="ChEBI" id="CHEBI:128769"/>
        <dbReference type="EC" id="5.3.3.2"/>
    </reaction>
</comment>
<comment type="cofactor">
    <cofactor evidence="1">
        <name>FMN</name>
        <dbReference type="ChEBI" id="CHEBI:58210"/>
    </cofactor>
</comment>
<comment type="cofactor">
    <cofactor evidence="1">
        <name>NADPH</name>
        <dbReference type="ChEBI" id="CHEBI:57783"/>
    </cofactor>
</comment>
<comment type="cofactor">
    <cofactor evidence="1">
        <name>Mg(2+)</name>
        <dbReference type="ChEBI" id="CHEBI:18420"/>
    </cofactor>
</comment>
<comment type="subunit">
    <text evidence="1">Homooctamer. Dimer of tetramers.</text>
</comment>
<comment type="subcellular location">
    <subcellularLocation>
        <location evidence="1">Cytoplasm</location>
    </subcellularLocation>
</comment>
<comment type="similarity">
    <text evidence="1">Belongs to the IPP isomerase type 2 family.</text>
</comment>